<evidence type="ECO:0000250" key="1">
    <source>
        <dbReference type="UniProtKB" id="P48551"/>
    </source>
</evidence>
<evidence type="ECO:0000255" key="2"/>
<evidence type="ECO:0000256" key="3">
    <source>
        <dbReference type="SAM" id="MobiDB-lite"/>
    </source>
</evidence>
<evidence type="ECO:0000269" key="4">
    <source>
    </source>
</evidence>
<evidence type="ECO:0000269" key="5">
    <source>
    </source>
</evidence>
<evidence type="ECO:0000269" key="6">
    <source>
    </source>
</evidence>
<evidence type="ECO:0000303" key="7">
    <source>
    </source>
</evidence>
<evidence type="ECO:0000303" key="8">
    <source>
    </source>
</evidence>
<evidence type="ECO:0000305" key="9"/>
<evidence type="ECO:0000305" key="10">
    <source>
    </source>
</evidence>
<evidence type="ECO:0000305" key="11">
    <source>
    </source>
</evidence>
<evidence type="ECO:0007744" key="12">
    <source>
    </source>
</evidence>
<sequence length="513" mass="56578">MRSRCTVSAVGLLSLCLVVSASLETITPSAFDGYPDEPCTINITIRNSRLILSWELENKSGPPANYTLWYTVMSKDENLTKVKNCSDTTKSSCDVTDKWLEGMESYVVAIVIVHRGDLTVCRCSDYIVPANAPLEPPEFEIVGFTDHINVTMEFPPVTSKIIQEKMKTTPFVIKEQIGDSVRKKHEPKVNNVTGNFTFVLRDLLPKTNYCVSLYFDDDPAIKSPLKCIVLQPGQESGLSESAIVGITTSCLVVMVFVSTIVMLKRIGYICLKDNLPNVLNFRHFLTWIIPERSPSEAIDRLEIIPTNKKKRLWNYDYEDGSDSDEEVPTASVTGYTMHGLTGKPLQQTSDTSASPEDPLHEEDSGAEESDEAGAGAGAEPELPTEAGAGPSEDPTGPYERRKSVLEDSFPREDNSSMDEPGDNIIFNVNLNSVFLRVLHDEDASETLSLEEDTILLDEGPQRTESDLRIAGGDRTQPPLPSLPSQDLWTEDGSSEKSDTSDSDADVGDGYIMR</sequence>
<keyword id="KW-0025">Alternative splicing</keyword>
<keyword id="KW-1003">Cell membrane</keyword>
<keyword id="KW-1015">Disulfide bond</keyword>
<keyword id="KW-0325">Glycoprotein</keyword>
<keyword id="KW-0472">Membrane</keyword>
<keyword id="KW-0597">Phosphoprotein</keyword>
<keyword id="KW-0675">Receptor</keyword>
<keyword id="KW-1185">Reference proteome</keyword>
<keyword id="KW-0964">Secreted</keyword>
<keyword id="KW-0732">Signal</keyword>
<keyword id="KW-0812">Transmembrane</keyword>
<keyword id="KW-1133">Transmembrane helix</keyword>
<protein>
    <recommendedName>
        <fullName>Interferon alpha/beta receptor 2</fullName>
        <shortName>IFN-R-2</shortName>
        <shortName>IFN-alpha/beta receptor 2</shortName>
    </recommendedName>
    <alternativeName>
        <fullName>Type I interferon receptor 2</fullName>
    </alternativeName>
</protein>
<dbReference type="EMBL" id="Y09813">
    <property type="protein sequence ID" value="CAA70943.1"/>
    <property type="molecule type" value="mRNA"/>
</dbReference>
<dbReference type="EMBL" id="Y09864">
    <property type="protein sequence ID" value="CAA70991.1"/>
    <property type="molecule type" value="mRNA"/>
</dbReference>
<dbReference type="EMBL" id="Y09865">
    <property type="protein sequence ID" value="CAA70992.1"/>
    <property type="molecule type" value="mRNA"/>
</dbReference>
<dbReference type="EMBL" id="AF013274">
    <property type="protein sequence ID" value="AAC53351.1"/>
    <property type="molecule type" value="mRNA"/>
</dbReference>
<dbReference type="EMBL" id="AF013486">
    <property type="protein sequence ID" value="AAC53352.1"/>
    <property type="molecule type" value="mRNA"/>
</dbReference>
<dbReference type="EMBL" id="AF367979">
    <property type="protein sequence ID" value="AAK73024.1"/>
    <property type="molecule type" value="Genomic_DNA"/>
</dbReference>
<dbReference type="EMBL" id="AK139169">
    <property type="protein sequence ID" value="BAE23909.1"/>
    <property type="molecule type" value="mRNA"/>
</dbReference>
<dbReference type="EMBL" id="AK151474">
    <property type="protein sequence ID" value="BAE30430.1"/>
    <property type="molecule type" value="mRNA"/>
</dbReference>
<dbReference type="EMBL" id="AK152878">
    <property type="protein sequence ID" value="BAE31563.1"/>
    <property type="molecule type" value="mRNA"/>
</dbReference>
<dbReference type="EMBL" id="AK153317">
    <property type="protein sequence ID" value="BAE31897.1"/>
    <property type="molecule type" value="mRNA"/>
</dbReference>
<dbReference type="EMBL" id="CH466602">
    <property type="protein sequence ID" value="EDL03831.1"/>
    <property type="molecule type" value="Genomic_DNA"/>
</dbReference>
<dbReference type="EMBL" id="BC071225">
    <property type="protein sequence ID" value="AAH71225.1"/>
    <property type="molecule type" value="mRNA"/>
</dbReference>
<dbReference type="CCDS" id="CCDS28325.1">
    <molecule id="O35664-1"/>
</dbReference>
<dbReference type="CCDS" id="CCDS49910.1">
    <molecule id="O35664-3"/>
</dbReference>
<dbReference type="CCDS" id="CCDS84262.1">
    <molecule id="O35664-2"/>
</dbReference>
<dbReference type="RefSeq" id="NP_001103968.1">
    <molecule id="O35664-3"/>
    <property type="nucleotide sequence ID" value="NM_001110498.1"/>
</dbReference>
<dbReference type="RefSeq" id="NP_001334187.1">
    <molecule id="O35664-2"/>
    <property type="nucleotide sequence ID" value="NM_001347258.1"/>
</dbReference>
<dbReference type="RefSeq" id="NP_034639.2">
    <molecule id="O35664-1"/>
    <property type="nucleotide sequence ID" value="NM_010509.2"/>
</dbReference>
<dbReference type="SMR" id="O35664"/>
<dbReference type="BioGRID" id="200539">
    <property type="interactions" value="2"/>
</dbReference>
<dbReference type="FunCoup" id="O35664">
    <property type="interactions" value="1043"/>
</dbReference>
<dbReference type="IntAct" id="O35664">
    <property type="interactions" value="2"/>
</dbReference>
<dbReference type="STRING" id="10090.ENSMUSP00000023693"/>
<dbReference type="GlyCosmos" id="O35664">
    <property type="glycosylation" value="8 sites, No reported glycans"/>
</dbReference>
<dbReference type="GlyGen" id="O35664">
    <property type="glycosylation" value="9 sites, 2 N-linked glycans (2 sites)"/>
</dbReference>
<dbReference type="iPTMnet" id="O35664"/>
<dbReference type="PhosphoSitePlus" id="O35664"/>
<dbReference type="SwissPalm" id="O35664"/>
<dbReference type="jPOST" id="O35664"/>
<dbReference type="PaxDb" id="10090-ENSMUSP00000023693"/>
<dbReference type="PeptideAtlas" id="O35664"/>
<dbReference type="ProteomicsDB" id="266986">
    <molecule id="O35664-1"/>
</dbReference>
<dbReference type="ProteomicsDB" id="266987">
    <molecule id="O35664-2"/>
</dbReference>
<dbReference type="ProteomicsDB" id="266988">
    <molecule id="O35664-3"/>
</dbReference>
<dbReference type="Antibodypedia" id="34938">
    <property type="antibodies" value="422 antibodies from 36 providers"/>
</dbReference>
<dbReference type="DNASU" id="15976"/>
<dbReference type="Ensembl" id="ENSMUST00000023693.14">
    <molecule id="O35664-1"/>
    <property type="protein sequence ID" value="ENSMUSP00000023693.8"/>
    <property type="gene ID" value="ENSMUSG00000022971.19"/>
</dbReference>
<dbReference type="Ensembl" id="ENSMUST00000089042.7">
    <molecule id="O35664-2"/>
    <property type="protein sequence ID" value="ENSMUSP00000086443.7"/>
    <property type="gene ID" value="ENSMUSG00000022971.19"/>
</dbReference>
<dbReference type="Ensembl" id="ENSMUST00000117836.8">
    <molecule id="O35664-3"/>
    <property type="protein sequence ID" value="ENSMUSP00000113358.2"/>
    <property type="gene ID" value="ENSMUSG00000022971.19"/>
</dbReference>
<dbReference type="GeneID" id="15976"/>
<dbReference type="KEGG" id="mmu:15976"/>
<dbReference type="UCSC" id="uc007zxh.2">
    <molecule id="O35664-1"/>
    <property type="organism name" value="mouse"/>
</dbReference>
<dbReference type="AGR" id="MGI:1098243"/>
<dbReference type="CTD" id="3455"/>
<dbReference type="MGI" id="MGI:1098243">
    <property type="gene designation" value="Ifnar2"/>
</dbReference>
<dbReference type="VEuPathDB" id="HostDB:ENSMUSG00000022971"/>
<dbReference type="eggNOG" id="ENOG502S60E">
    <property type="taxonomic scope" value="Eukaryota"/>
</dbReference>
<dbReference type="GeneTree" id="ENSGT00510000049322"/>
<dbReference type="HOGENOM" id="CLU_040302_0_0_1"/>
<dbReference type="InParanoid" id="O35664"/>
<dbReference type="OMA" id="DWQCTHA"/>
<dbReference type="OrthoDB" id="8947665at2759"/>
<dbReference type="TreeFam" id="TF335897"/>
<dbReference type="Reactome" id="R-MMU-909733">
    <property type="pathway name" value="Interferon alpha/beta signaling"/>
</dbReference>
<dbReference type="Reactome" id="R-MMU-912694">
    <property type="pathway name" value="Regulation of IFNA/IFNB signaling"/>
</dbReference>
<dbReference type="BioGRID-ORCS" id="15976">
    <property type="hits" value="12 hits in 84 CRISPR screens"/>
</dbReference>
<dbReference type="ChiTaRS" id="Ifnar2">
    <property type="organism name" value="mouse"/>
</dbReference>
<dbReference type="PRO" id="PR:O35664"/>
<dbReference type="Proteomes" id="UP000000589">
    <property type="component" value="Chromosome 16"/>
</dbReference>
<dbReference type="RNAct" id="O35664">
    <property type="molecule type" value="protein"/>
</dbReference>
<dbReference type="Bgee" id="ENSMUSG00000022971">
    <property type="expression patterns" value="Expressed in granulocyte and 248 other cell types or tissues"/>
</dbReference>
<dbReference type="ExpressionAtlas" id="O35664">
    <property type="expression patterns" value="baseline and differential"/>
</dbReference>
<dbReference type="GO" id="GO:0005615">
    <property type="term" value="C:extracellular space"/>
    <property type="evidence" value="ECO:0000314"/>
    <property type="project" value="MGI"/>
</dbReference>
<dbReference type="GO" id="GO:0016020">
    <property type="term" value="C:membrane"/>
    <property type="evidence" value="ECO:0000304"/>
    <property type="project" value="MGI"/>
</dbReference>
<dbReference type="GO" id="GO:0005886">
    <property type="term" value="C:plasma membrane"/>
    <property type="evidence" value="ECO:0000250"/>
    <property type="project" value="UniProtKB"/>
</dbReference>
<dbReference type="GO" id="GO:0004905">
    <property type="term" value="F:type I interferon receptor activity"/>
    <property type="evidence" value="ECO:0000314"/>
    <property type="project" value="MGI"/>
</dbReference>
<dbReference type="GO" id="GO:0051607">
    <property type="term" value="P:defense response to virus"/>
    <property type="evidence" value="ECO:0000250"/>
    <property type="project" value="UniProtKB"/>
</dbReference>
<dbReference type="GO" id="GO:0033080">
    <property type="term" value="P:immature T cell proliferation in thymus"/>
    <property type="evidence" value="ECO:0000314"/>
    <property type="project" value="MGI"/>
</dbReference>
<dbReference type="GO" id="GO:0006357">
    <property type="term" value="P:regulation of transcription by RNA polymerase II"/>
    <property type="evidence" value="ECO:0000314"/>
    <property type="project" value="MGI"/>
</dbReference>
<dbReference type="GO" id="GO:0035455">
    <property type="term" value="P:response to interferon-alpha"/>
    <property type="evidence" value="ECO:0000250"/>
    <property type="project" value="UniProtKB"/>
</dbReference>
<dbReference type="GO" id="GO:0035456">
    <property type="term" value="P:response to interferon-beta"/>
    <property type="evidence" value="ECO:0000250"/>
    <property type="project" value="UniProtKB"/>
</dbReference>
<dbReference type="FunFam" id="2.60.40.10:FF:003228">
    <property type="entry name" value="Interferon alpha and beta receptor subunit 2"/>
    <property type="match status" value="1"/>
</dbReference>
<dbReference type="FunFam" id="2.60.40.10:FF:000909">
    <property type="entry name" value="Interferon alpha/beta receptor 2"/>
    <property type="match status" value="1"/>
</dbReference>
<dbReference type="Gene3D" id="2.60.40.10">
    <property type="entry name" value="Immunoglobulins"/>
    <property type="match status" value="2"/>
</dbReference>
<dbReference type="InterPro" id="IPR003961">
    <property type="entry name" value="FN3_dom"/>
</dbReference>
<dbReference type="InterPro" id="IPR036116">
    <property type="entry name" value="FN3_sf"/>
</dbReference>
<dbReference type="InterPro" id="IPR013783">
    <property type="entry name" value="Ig-like_fold"/>
</dbReference>
<dbReference type="InterPro" id="IPR015373">
    <property type="entry name" value="Interferon/interleukin_rcp_dom"/>
</dbReference>
<dbReference type="InterPro" id="IPR050650">
    <property type="entry name" value="Type-II_Cytokine-TF_Rcpt"/>
</dbReference>
<dbReference type="PANTHER" id="PTHR20859:SF84">
    <property type="entry name" value="INTERFERON ALPHA_BETA RECEPTOR 2"/>
    <property type="match status" value="1"/>
</dbReference>
<dbReference type="PANTHER" id="PTHR20859">
    <property type="entry name" value="INTERFERON/INTERLEUKIN RECEPTOR"/>
    <property type="match status" value="1"/>
</dbReference>
<dbReference type="Pfam" id="PF09294">
    <property type="entry name" value="Interfer-bind"/>
    <property type="match status" value="1"/>
</dbReference>
<dbReference type="Pfam" id="PF01108">
    <property type="entry name" value="Tissue_fac"/>
    <property type="match status" value="1"/>
</dbReference>
<dbReference type="SUPFAM" id="SSF49265">
    <property type="entry name" value="Fibronectin type III"/>
    <property type="match status" value="2"/>
</dbReference>
<organism>
    <name type="scientific">Mus musculus</name>
    <name type="common">Mouse</name>
    <dbReference type="NCBI Taxonomy" id="10090"/>
    <lineage>
        <taxon>Eukaryota</taxon>
        <taxon>Metazoa</taxon>
        <taxon>Chordata</taxon>
        <taxon>Craniata</taxon>
        <taxon>Vertebrata</taxon>
        <taxon>Euteleostomi</taxon>
        <taxon>Mammalia</taxon>
        <taxon>Eutheria</taxon>
        <taxon>Euarchontoglires</taxon>
        <taxon>Glires</taxon>
        <taxon>Rodentia</taxon>
        <taxon>Myomorpha</taxon>
        <taxon>Muroidea</taxon>
        <taxon>Muridae</taxon>
        <taxon>Murinae</taxon>
        <taxon>Mus</taxon>
        <taxon>Mus</taxon>
    </lineage>
</organism>
<comment type="function">
    <text evidence="1">Together with IFNAR1, forms the heterodimeric receptor for type I interferons (including interferons alpha, beta, epsilon, omega and kappa). Type I interferon binding activates the JAK-STAT signaling cascade, resulting in transcriptional activation or repression of interferon-regulated genes that encode the effectors of the interferon response. Mechanistically, type I interferon-binding brings the IFNAR1 and IFNAR2 subunits into close proximity with one another, driving their associated Janus kinases (JAKs) (TYK2 bound to IFNAR1 and JAK1 bound to IFNAR2) to cross-phosphorylate one another. The activated kinases phosphorylate specific tyrosine residues on the intracellular domains of IFNAR1 and IFNAR2, forming docking sites for the STAT transcription factors (STAT1, STAT2 and STAT). STAT proteins are then phosphorylated by the JAKs, promoting their translocation into the nucleus to regulate expression of interferon-regulated genes.</text>
</comment>
<comment type="function">
    <molecule>Isoform 2</molecule>
    <text evidence="10 11">May be potent inhibitors of type I IFN receptor activity.</text>
</comment>
<comment type="function">
    <molecule>Isoform 3</molecule>
    <text evidence="10 11">May be potent inhibitors of type I IFN receptor activity.</text>
</comment>
<comment type="subunit">
    <text evidence="1">Heterodimer with IFNAR1; forming the receptor for type I interferon. Interacts with the transcriptional factors STAT1 and STAT2. Interacts with JAK1. Interacts with USP18; indirectly via STAT2, it negatively regulates the assembly of the ternary interferon-IFNAR1-IFNAR2 complex and therefore type I interferon signaling.</text>
</comment>
<comment type="subcellular location">
    <molecule>Isoform 1</molecule>
    <subcellularLocation>
        <location evidence="10 11">Cell membrane</location>
        <topology evidence="11">Single-pass type I membrane protein</topology>
    </subcellularLocation>
</comment>
<comment type="subcellular location">
    <molecule>Isoform 2</molecule>
    <subcellularLocation>
        <location evidence="11">Secreted</location>
    </subcellularLocation>
</comment>
<comment type="subcellular location">
    <molecule>Isoform 3</molecule>
    <subcellularLocation>
        <location evidence="10 11">Secreted</location>
    </subcellularLocation>
</comment>
<comment type="alternative products">
    <event type="alternative splicing"/>
    <isoform>
        <id>O35664-1</id>
        <name>1</name>
        <name>IFNaR2c</name>
        <sequence type="displayed"/>
    </isoform>
    <isoform>
        <id>O35664-2</id>
        <name>2</name>
        <name>IFNaR2b</name>
        <sequence type="described" ref="VSP_050345 VSP_050347"/>
    </isoform>
    <isoform>
        <id>O35664-3</id>
        <name>3</name>
        <name>IFNaR2a</name>
        <sequence type="described" ref="VSP_050346 VSP_050348"/>
    </isoform>
</comment>
<comment type="tissue specificity">
    <text evidence="5 6">Widely expressed. Detected in liver, testis, kidney, salivary gland, thymus, brain, lung and placenta. Isoform 1, isoform 2 and isoform 3 are expressed in brain.</text>
</comment>
<comment type="PTM">
    <text evidence="1">Phosphorylated on tyrosine residues upon interferon binding. Phosphorylation at Tyr-335 or Tyr-510 are sufficient to mediate interferon dependent activation of STAT1, STAT2 and STAT3 leading to antiproliferative effects on many different cell types (By similarity).</text>
</comment>
<comment type="similarity">
    <text evidence="9">Belongs to the type II cytokine receptor family.</text>
</comment>
<proteinExistence type="evidence at protein level"/>
<accession>O35664</accession>
<accession>O35238</accession>
<accession>O35663</accession>
<accession>O35983</accession>
<accession>Q923Z5</accession>
<name>INAR2_MOUSE</name>
<feature type="signal peptide" evidence="2">
    <location>
        <begin position="1"/>
        <end position="21"/>
    </location>
</feature>
<feature type="chain" id="PRO_0000011007" description="Interferon alpha/beta receptor 2">
    <location>
        <begin position="22"/>
        <end position="513"/>
    </location>
</feature>
<feature type="topological domain" description="Extracellular" evidence="2">
    <location>
        <begin position="22"/>
        <end position="242"/>
    </location>
</feature>
<feature type="transmembrane region" description="Helical" evidence="2">
    <location>
        <begin position="243"/>
        <end position="263"/>
    </location>
</feature>
<feature type="topological domain" description="Cytoplasmic" evidence="2">
    <location>
        <begin position="264"/>
        <end position="513"/>
    </location>
</feature>
<feature type="region of interest" description="Disordered" evidence="3">
    <location>
        <begin position="334"/>
        <end position="402"/>
    </location>
</feature>
<feature type="region of interest" description="Mediates interaction with STAT2 (and required for the recruitment of USP18)" evidence="1">
    <location>
        <begin position="421"/>
        <end position="444"/>
    </location>
</feature>
<feature type="region of interest" description="Disordered" evidence="3">
    <location>
        <begin position="458"/>
        <end position="513"/>
    </location>
</feature>
<feature type="compositionally biased region" description="Polar residues" evidence="3">
    <location>
        <begin position="344"/>
        <end position="354"/>
    </location>
</feature>
<feature type="compositionally biased region" description="Low complexity" evidence="3">
    <location>
        <begin position="377"/>
        <end position="389"/>
    </location>
</feature>
<feature type="modified residue" description="Phosphotyrosine" evidence="1">
    <location>
        <position position="335"/>
    </location>
</feature>
<feature type="modified residue" description="Phosphoserine" evidence="1">
    <location>
        <position position="403"/>
    </location>
</feature>
<feature type="modified residue" description="Phosphoserine" evidence="12">
    <location>
        <position position="448"/>
    </location>
</feature>
<feature type="modified residue" description="Phosphoserine" evidence="12">
    <location>
        <position position="465"/>
    </location>
</feature>
<feature type="modified residue" description="Phosphotyrosine" evidence="1">
    <location>
        <position position="510"/>
    </location>
</feature>
<feature type="glycosylation site" description="N-linked (GlcNAc...) asparagine" evidence="2">
    <location>
        <position position="42"/>
    </location>
</feature>
<feature type="glycosylation site" description="N-linked (GlcNAc...) asparagine" evidence="2">
    <location>
        <position position="58"/>
    </location>
</feature>
<feature type="glycosylation site" description="N-linked (GlcNAc...) asparagine" evidence="2">
    <location>
        <position position="65"/>
    </location>
</feature>
<feature type="glycosylation site" description="N-linked (GlcNAc...) asparagine" evidence="2">
    <location>
        <position position="78"/>
    </location>
</feature>
<feature type="glycosylation site" description="N-linked (GlcNAc...) asparagine" evidence="2">
    <location>
        <position position="84"/>
    </location>
</feature>
<feature type="glycosylation site" description="N-linked (GlcNAc...) asparagine" evidence="2">
    <location>
        <position position="149"/>
    </location>
</feature>
<feature type="glycosylation site" description="N-linked (GlcNAc...) asparagine" evidence="2">
    <location>
        <position position="191"/>
    </location>
</feature>
<feature type="glycosylation site" description="N-linked (GlcNAc...) asparagine" evidence="4">
    <location>
        <position position="195"/>
    </location>
</feature>
<feature type="disulfide bond" evidence="1">
    <location>
        <begin position="39"/>
        <end position="123"/>
    </location>
</feature>
<feature type="disulfide bond" evidence="1">
    <location>
        <begin position="85"/>
        <end position="93"/>
    </location>
</feature>
<feature type="disulfide bond" evidence="1">
    <location>
        <begin position="210"/>
        <end position="227"/>
    </location>
</feature>
<feature type="splice variant" id="VSP_050345" description="In isoform 2." evidence="8">
    <original>GLSESAIVGIT</original>
    <variation>ELPPLFNLDNP</variation>
    <location>
        <begin position="237"/>
        <end position="247"/>
    </location>
</feature>
<feature type="splice variant" id="VSP_050346" description="In isoform 3." evidence="7 8">
    <original>LSESAIVGITT</original>
    <variation>MARFLKFALLF</variation>
    <location>
        <begin position="238"/>
        <end position="248"/>
    </location>
</feature>
<feature type="splice variant" id="VSP_050347" description="In isoform 2." evidence="8">
    <location>
        <begin position="248"/>
        <end position="513"/>
    </location>
</feature>
<feature type="splice variant" id="VSP_050348" description="In isoform 3." evidence="7 8">
    <location>
        <begin position="249"/>
        <end position="513"/>
    </location>
</feature>
<feature type="sequence conflict" description="In Ref. 1; CAA70992." evidence="9" ref="1">
    <original>K</original>
    <variation>Q</variation>
    <location>
        <position position="160"/>
    </location>
</feature>
<feature type="sequence conflict" description="In Ref. 1; CAA70992." evidence="9" ref="1">
    <original>P</original>
    <variation>S</variation>
    <location>
        <position position="276"/>
    </location>
</feature>
<feature type="sequence conflict" description="In Ref. 2; AAC53351." evidence="9" ref="2">
    <original>G</original>
    <variation>E</variation>
    <location>
        <position position="339"/>
    </location>
</feature>
<feature type="sequence conflict" description="In Ref. 2; AAC53351." evidence="9" ref="2">
    <original>N</original>
    <variation>S</variation>
    <location>
        <position position="429"/>
    </location>
</feature>
<gene>
    <name type="primary">Ifnar2</name>
</gene>
<reference key="1">
    <citation type="journal article" date="1997" name="Gene">
        <title>Mammalian type I interferon receptors consists of two subunits: IFNaR1 and IFNaR2.</title>
        <authorList>
            <person name="Kim S.H."/>
            <person name="Cohen B."/>
            <person name="Novick D."/>
            <person name="Rubinstein M."/>
        </authorList>
    </citation>
    <scope>NUCLEOTIDE SEQUENCE [MRNA] (ISOFORMS 1; 2 AND 3)</scope>
    <scope>ALTERNATIVE SPLICING</scope>
    <scope>FUNCTION</scope>
    <scope>SUBCELLULAR LOCATION</scope>
    <scope>TISSUE SPECIFICITY</scope>
    <source>
        <strain>C57BL/6J</strain>
        <tissue>Brain</tissue>
    </source>
</reference>
<reference key="2">
    <citation type="journal article" date="1997" name="J. Biol. Chem.">
        <title>Cloning and characterization of soluble and transmembrane isoforms of a novel component of the murine type I interferon receptor, IFNAR 2.</title>
        <authorList>
            <person name="Owczarek C.M."/>
            <person name="Hwang S.Y."/>
            <person name="Holland K.A."/>
            <person name="Gulluyan L.M."/>
            <person name="Tavaria M."/>
            <person name="Weaver B."/>
            <person name="Reich N.C."/>
            <person name="Kola I."/>
            <person name="Hertzog P.J."/>
        </authorList>
    </citation>
    <scope>NUCLEOTIDE SEQUENCE [MRNA] (ISOFORMS 1 AND 3)</scope>
    <scope>FUNCTION</scope>
    <scope>SUBCELLULAR LOCATION</scope>
    <scope>TISSUE SPECIFICITY</scope>
    <source>
        <tissue>Lung</tissue>
        <tissue>Testis</tissue>
    </source>
</reference>
<reference key="3">
    <citation type="journal article" date="2002" name="Biochem. J.">
        <title>Multiple regions within the promoter of the murine Ifnar-2 gene confer basal and inducible expression.</title>
        <authorList>
            <person name="Hardy M.P."/>
            <person name="Hertzog P.J."/>
            <person name="Owczarek C.M."/>
        </authorList>
    </citation>
    <scope>NUCLEOTIDE SEQUENCE [MRNA] (ISOFORM 1)</scope>
    <source>
        <strain>129/SvJ</strain>
    </source>
</reference>
<reference key="4">
    <citation type="journal article" date="2005" name="Science">
        <title>The transcriptional landscape of the mammalian genome.</title>
        <authorList>
            <person name="Carninci P."/>
            <person name="Kasukawa T."/>
            <person name="Katayama S."/>
            <person name="Gough J."/>
            <person name="Frith M.C."/>
            <person name="Maeda N."/>
            <person name="Oyama R."/>
            <person name="Ravasi T."/>
            <person name="Lenhard B."/>
            <person name="Wells C."/>
            <person name="Kodzius R."/>
            <person name="Shimokawa K."/>
            <person name="Bajic V.B."/>
            <person name="Brenner S.E."/>
            <person name="Batalov S."/>
            <person name="Forrest A.R."/>
            <person name="Zavolan M."/>
            <person name="Davis M.J."/>
            <person name="Wilming L.G."/>
            <person name="Aidinis V."/>
            <person name="Allen J.E."/>
            <person name="Ambesi-Impiombato A."/>
            <person name="Apweiler R."/>
            <person name="Aturaliya R.N."/>
            <person name="Bailey T.L."/>
            <person name="Bansal M."/>
            <person name="Baxter L."/>
            <person name="Beisel K.W."/>
            <person name="Bersano T."/>
            <person name="Bono H."/>
            <person name="Chalk A.M."/>
            <person name="Chiu K.P."/>
            <person name="Choudhary V."/>
            <person name="Christoffels A."/>
            <person name="Clutterbuck D.R."/>
            <person name="Crowe M.L."/>
            <person name="Dalla E."/>
            <person name="Dalrymple B.P."/>
            <person name="de Bono B."/>
            <person name="Della Gatta G."/>
            <person name="di Bernardo D."/>
            <person name="Down T."/>
            <person name="Engstrom P."/>
            <person name="Fagiolini M."/>
            <person name="Faulkner G."/>
            <person name="Fletcher C.F."/>
            <person name="Fukushima T."/>
            <person name="Furuno M."/>
            <person name="Futaki S."/>
            <person name="Gariboldi M."/>
            <person name="Georgii-Hemming P."/>
            <person name="Gingeras T.R."/>
            <person name="Gojobori T."/>
            <person name="Green R.E."/>
            <person name="Gustincich S."/>
            <person name="Harbers M."/>
            <person name="Hayashi Y."/>
            <person name="Hensch T.K."/>
            <person name="Hirokawa N."/>
            <person name="Hill D."/>
            <person name="Huminiecki L."/>
            <person name="Iacono M."/>
            <person name="Ikeo K."/>
            <person name="Iwama A."/>
            <person name="Ishikawa T."/>
            <person name="Jakt M."/>
            <person name="Kanapin A."/>
            <person name="Katoh M."/>
            <person name="Kawasawa Y."/>
            <person name="Kelso J."/>
            <person name="Kitamura H."/>
            <person name="Kitano H."/>
            <person name="Kollias G."/>
            <person name="Krishnan S.P."/>
            <person name="Kruger A."/>
            <person name="Kummerfeld S.K."/>
            <person name="Kurochkin I.V."/>
            <person name="Lareau L.F."/>
            <person name="Lazarevic D."/>
            <person name="Lipovich L."/>
            <person name="Liu J."/>
            <person name="Liuni S."/>
            <person name="McWilliam S."/>
            <person name="Madan Babu M."/>
            <person name="Madera M."/>
            <person name="Marchionni L."/>
            <person name="Matsuda H."/>
            <person name="Matsuzawa S."/>
            <person name="Miki H."/>
            <person name="Mignone F."/>
            <person name="Miyake S."/>
            <person name="Morris K."/>
            <person name="Mottagui-Tabar S."/>
            <person name="Mulder N."/>
            <person name="Nakano N."/>
            <person name="Nakauchi H."/>
            <person name="Ng P."/>
            <person name="Nilsson R."/>
            <person name="Nishiguchi S."/>
            <person name="Nishikawa S."/>
            <person name="Nori F."/>
            <person name="Ohara O."/>
            <person name="Okazaki Y."/>
            <person name="Orlando V."/>
            <person name="Pang K.C."/>
            <person name="Pavan W.J."/>
            <person name="Pavesi G."/>
            <person name="Pesole G."/>
            <person name="Petrovsky N."/>
            <person name="Piazza S."/>
            <person name="Reed J."/>
            <person name="Reid J.F."/>
            <person name="Ring B.Z."/>
            <person name="Ringwald M."/>
            <person name="Rost B."/>
            <person name="Ruan Y."/>
            <person name="Salzberg S.L."/>
            <person name="Sandelin A."/>
            <person name="Schneider C."/>
            <person name="Schoenbach C."/>
            <person name="Sekiguchi K."/>
            <person name="Semple C.A."/>
            <person name="Seno S."/>
            <person name="Sessa L."/>
            <person name="Sheng Y."/>
            <person name="Shibata Y."/>
            <person name="Shimada H."/>
            <person name="Shimada K."/>
            <person name="Silva D."/>
            <person name="Sinclair B."/>
            <person name="Sperling S."/>
            <person name="Stupka E."/>
            <person name="Sugiura K."/>
            <person name="Sultana R."/>
            <person name="Takenaka Y."/>
            <person name="Taki K."/>
            <person name="Tammoja K."/>
            <person name="Tan S.L."/>
            <person name="Tang S."/>
            <person name="Taylor M.S."/>
            <person name="Tegner J."/>
            <person name="Teichmann S.A."/>
            <person name="Ueda H.R."/>
            <person name="van Nimwegen E."/>
            <person name="Verardo R."/>
            <person name="Wei C.L."/>
            <person name="Yagi K."/>
            <person name="Yamanishi H."/>
            <person name="Zabarovsky E."/>
            <person name="Zhu S."/>
            <person name="Zimmer A."/>
            <person name="Hide W."/>
            <person name="Bult C."/>
            <person name="Grimmond S.M."/>
            <person name="Teasdale R.D."/>
            <person name="Liu E.T."/>
            <person name="Brusic V."/>
            <person name="Quackenbush J."/>
            <person name="Wahlestedt C."/>
            <person name="Mattick J.S."/>
            <person name="Hume D.A."/>
            <person name="Kai C."/>
            <person name="Sasaki D."/>
            <person name="Tomaru Y."/>
            <person name="Fukuda S."/>
            <person name="Kanamori-Katayama M."/>
            <person name="Suzuki M."/>
            <person name="Aoki J."/>
            <person name="Arakawa T."/>
            <person name="Iida J."/>
            <person name="Imamura K."/>
            <person name="Itoh M."/>
            <person name="Kato T."/>
            <person name="Kawaji H."/>
            <person name="Kawagashira N."/>
            <person name="Kawashima T."/>
            <person name="Kojima M."/>
            <person name="Kondo S."/>
            <person name="Konno H."/>
            <person name="Nakano K."/>
            <person name="Ninomiya N."/>
            <person name="Nishio T."/>
            <person name="Okada M."/>
            <person name="Plessy C."/>
            <person name="Shibata K."/>
            <person name="Shiraki T."/>
            <person name="Suzuki S."/>
            <person name="Tagami M."/>
            <person name="Waki K."/>
            <person name="Watahiki A."/>
            <person name="Okamura-Oho Y."/>
            <person name="Suzuki H."/>
            <person name="Kawai J."/>
            <person name="Hayashizaki Y."/>
        </authorList>
    </citation>
    <scope>NUCLEOTIDE SEQUENCE [LARGE SCALE MRNA] (ISOFORM 1)</scope>
    <source>
        <strain>C57BL/6J</strain>
        <tissue>Bone marrow</tissue>
        <tissue>Cerebellum</tissue>
    </source>
</reference>
<reference key="5">
    <citation type="submission" date="2005-09" db="EMBL/GenBank/DDBJ databases">
        <authorList>
            <person name="Mural R.J."/>
            <person name="Adams M.D."/>
            <person name="Myers E.W."/>
            <person name="Smith H.O."/>
            <person name="Venter J.C."/>
        </authorList>
    </citation>
    <scope>NUCLEOTIDE SEQUENCE [LARGE SCALE GENOMIC DNA]</scope>
</reference>
<reference key="6">
    <citation type="journal article" date="2004" name="Genome Res.">
        <title>The status, quality, and expansion of the NIH full-length cDNA project: the Mammalian Gene Collection (MGC).</title>
        <authorList>
            <consortium name="The MGC Project Team"/>
        </authorList>
    </citation>
    <scope>NUCLEOTIDE SEQUENCE [LARGE SCALE MRNA]</scope>
    <source>
        <strain>FVB/N</strain>
        <tissue>Salivary gland</tissue>
    </source>
</reference>
<reference key="7">
    <citation type="journal article" date="2006" name="J. Proteome Res.">
        <title>Proteome-wide characterization of N-glycosylation events by diagonal chromatography.</title>
        <authorList>
            <person name="Ghesquiere B."/>
            <person name="Van Damme J."/>
            <person name="Martens L."/>
            <person name="Vandekerckhove J."/>
            <person name="Gevaert K."/>
        </authorList>
    </citation>
    <scope>GLYCOSYLATION [LARGE SCALE ANALYSIS] AT ASN-195</scope>
    <source>
        <strain>C57BL/6J</strain>
        <tissue>Plasma</tissue>
    </source>
</reference>
<reference key="8">
    <citation type="journal article" date="2009" name="Immunity">
        <title>The phagosomal proteome in interferon-gamma-activated macrophages.</title>
        <authorList>
            <person name="Trost M."/>
            <person name="English L."/>
            <person name="Lemieux S."/>
            <person name="Courcelles M."/>
            <person name="Desjardins M."/>
            <person name="Thibault P."/>
        </authorList>
    </citation>
    <scope>PHOSPHORYLATION [LARGE SCALE ANALYSIS] AT SER-448 AND SER-465</scope>
    <scope>IDENTIFICATION BY MASS SPECTROMETRY [LARGE SCALE ANALYSIS]</scope>
</reference>
<reference key="9">
    <citation type="journal article" date="2010" name="Cell">
        <title>A tissue-specific atlas of mouse protein phosphorylation and expression.</title>
        <authorList>
            <person name="Huttlin E.L."/>
            <person name="Jedrychowski M.P."/>
            <person name="Elias J.E."/>
            <person name="Goswami T."/>
            <person name="Rad R."/>
            <person name="Beausoleil S.A."/>
            <person name="Villen J."/>
            <person name="Haas W."/>
            <person name="Sowa M.E."/>
            <person name="Gygi S.P."/>
        </authorList>
    </citation>
    <scope>IDENTIFICATION BY MASS SPECTROMETRY [LARGE SCALE ANALYSIS]</scope>
    <source>
        <tissue>Spleen</tissue>
    </source>
</reference>